<keyword id="KW-0997">Cell inner membrane</keyword>
<keyword id="KW-1003">Cell membrane</keyword>
<keyword id="KW-0472">Membrane</keyword>
<keyword id="KW-0520">NAD</keyword>
<keyword id="KW-0874">Quinone</keyword>
<keyword id="KW-1278">Translocase</keyword>
<keyword id="KW-0813">Transport</keyword>
<keyword id="KW-0830">Ubiquinone</keyword>
<gene>
    <name evidence="1" type="primary">nuoC</name>
    <name type="ordered locus">BH08930</name>
</gene>
<protein>
    <recommendedName>
        <fullName evidence="1">NADH-quinone oxidoreductase subunit C</fullName>
        <ecNumber evidence="1">7.1.1.-</ecNumber>
    </recommendedName>
    <alternativeName>
        <fullName evidence="1">NADH dehydrogenase I subunit C</fullName>
    </alternativeName>
    <alternativeName>
        <fullName evidence="1">NDH-1 subunit C</fullName>
    </alternativeName>
</protein>
<evidence type="ECO:0000255" key="1">
    <source>
        <dbReference type="HAMAP-Rule" id="MF_01357"/>
    </source>
</evidence>
<accession>Q6G390</accession>
<feature type="chain" id="PRO_0000358042" description="NADH-quinone oxidoreductase subunit C">
    <location>
        <begin position="1"/>
        <end position="202"/>
    </location>
</feature>
<name>NUOC_BARHE</name>
<sequence length="202" mass="23566">MSESLEELAAYLKSKLGDKLEETVLAFGELTIVSRLDAITDVLIFVRDDSRCQFINITDISGVDYPCRDKRFDVSYQLLSPRHNLRLRVKVRTDENIPVASACSIYPGAEWYERETYDMYGILFSGHPDLRRILTDYGFEGHPLRKDFPVTGFVECRYDNEAKRVIYEPVVLRQEMRNFDFLSPWEGAQYILPCDEKTKDKR</sequence>
<reference key="1">
    <citation type="journal article" date="2004" name="Proc. Natl. Acad. Sci. U.S.A.">
        <title>The louse-borne human pathogen Bartonella quintana is a genomic derivative of the zoonotic agent Bartonella henselae.</title>
        <authorList>
            <person name="Alsmark U.C.M."/>
            <person name="Frank A.C."/>
            <person name="Karlberg E.O."/>
            <person name="Legault B.-A."/>
            <person name="Ardell D.H."/>
            <person name="Canbaeck B."/>
            <person name="Eriksson A.-S."/>
            <person name="Naeslund A.K."/>
            <person name="Handley S.A."/>
            <person name="Huvet M."/>
            <person name="La Scola B."/>
            <person name="Holmberg M."/>
            <person name="Andersson S.G.E."/>
        </authorList>
    </citation>
    <scope>NUCLEOTIDE SEQUENCE [LARGE SCALE GENOMIC DNA]</scope>
    <source>
        <strain>ATCC 49882 / DSM 28221 / CCUG 30454 / Houston 1</strain>
    </source>
</reference>
<proteinExistence type="inferred from homology"/>
<comment type="function">
    <text evidence="1">NDH-1 shuttles electrons from NADH, via FMN and iron-sulfur (Fe-S) centers, to quinones in the respiratory chain. The immediate electron acceptor for the enzyme in this species is believed to be ubiquinone. Couples the redox reaction to proton translocation (for every two electrons transferred, four hydrogen ions are translocated across the cytoplasmic membrane), and thus conserves the redox energy in a proton gradient.</text>
</comment>
<comment type="catalytic activity">
    <reaction evidence="1">
        <text>a quinone + NADH + 5 H(+)(in) = a quinol + NAD(+) + 4 H(+)(out)</text>
        <dbReference type="Rhea" id="RHEA:57888"/>
        <dbReference type="ChEBI" id="CHEBI:15378"/>
        <dbReference type="ChEBI" id="CHEBI:24646"/>
        <dbReference type="ChEBI" id="CHEBI:57540"/>
        <dbReference type="ChEBI" id="CHEBI:57945"/>
        <dbReference type="ChEBI" id="CHEBI:132124"/>
    </reaction>
</comment>
<comment type="subunit">
    <text evidence="1">NDH-1 is composed of 14 different subunits. Subunits NuoB, C, D, E, F, and G constitute the peripheral sector of the complex.</text>
</comment>
<comment type="subcellular location">
    <subcellularLocation>
        <location evidence="1">Cell inner membrane</location>
        <topology evidence="1">Peripheral membrane protein</topology>
        <orientation evidence="1">Cytoplasmic side</orientation>
    </subcellularLocation>
</comment>
<comment type="similarity">
    <text evidence="1">Belongs to the complex I 30 kDa subunit family.</text>
</comment>
<dbReference type="EC" id="7.1.1.-" evidence="1"/>
<dbReference type="EMBL" id="BX897699">
    <property type="protein sequence ID" value="CAF27691.1"/>
    <property type="molecule type" value="Genomic_DNA"/>
</dbReference>
<dbReference type="RefSeq" id="WP_011180786.1">
    <property type="nucleotide sequence ID" value="NZ_LRIJ02000001.1"/>
</dbReference>
<dbReference type="SMR" id="Q6G390"/>
<dbReference type="PaxDb" id="283166-BH08930"/>
<dbReference type="EnsemblBacteria" id="CAF27691">
    <property type="protein sequence ID" value="CAF27691"/>
    <property type="gene ID" value="BH08930"/>
</dbReference>
<dbReference type="KEGG" id="bhe:BH08930"/>
<dbReference type="eggNOG" id="COG0852">
    <property type="taxonomic scope" value="Bacteria"/>
</dbReference>
<dbReference type="OrthoDB" id="9803286at2"/>
<dbReference type="Proteomes" id="UP000000421">
    <property type="component" value="Chromosome"/>
</dbReference>
<dbReference type="GO" id="GO:0005886">
    <property type="term" value="C:plasma membrane"/>
    <property type="evidence" value="ECO:0007669"/>
    <property type="project" value="UniProtKB-SubCell"/>
</dbReference>
<dbReference type="GO" id="GO:0008137">
    <property type="term" value="F:NADH dehydrogenase (ubiquinone) activity"/>
    <property type="evidence" value="ECO:0007669"/>
    <property type="project" value="InterPro"/>
</dbReference>
<dbReference type="GO" id="GO:0050136">
    <property type="term" value="F:NADH:ubiquinone reductase (non-electrogenic) activity"/>
    <property type="evidence" value="ECO:0007669"/>
    <property type="project" value="UniProtKB-UniRule"/>
</dbReference>
<dbReference type="GO" id="GO:0048038">
    <property type="term" value="F:quinone binding"/>
    <property type="evidence" value="ECO:0007669"/>
    <property type="project" value="UniProtKB-KW"/>
</dbReference>
<dbReference type="Gene3D" id="3.30.460.80">
    <property type="entry name" value="NADH:ubiquinone oxidoreductase, 30kDa subunit"/>
    <property type="match status" value="1"/>
</dbReference>
<dbReference type="HAMAP" id="MF_01357">
    <property type="entry name" value="NDH1_NuoC"/>
    <property type="match status" value="1"/>
</dbReference>
<dbReference type="InterPro" id="IPR010218">
    <property type="entry name" value="NADH_DH_suC"/>
</dbReference>
<dbReference type="InterPro" id="IPR037232">
    <property type="entry name" value="NADH_quin_OxRdtase_su_C/D-like"/>
</dbReference>
<dbReference type="InterPro" id="IPR001268">
    <property type="entry name" value="NADH_UbQ_OxRdtase_30kDa_su"/>
</dbReference>
<dbReference type="InterPro" id="IPR020396">
    <property type="entry name" value="NADH_UbQ_OxRdtase_CS"/>
</dbReference>
<dbReference type="NCBIfam" id="TIGR01961">
    <property type="entry name" value="NuoC_fam"/>
    <property type="match status" value="1"/>
</dbReference>
<dbReference type="NCBIfam" id="NF004730">
    <property type="entry name" value="PRK06074.1-1"/>
    <property type="match status" value="1"/>
</dbReference>
<dbReference type="NCBIfam" id="NF004733">
    <property type="entry name" value="PRK06074.1-5"/>
    <property type="match status" value="1"/>
</dbReference>
<dbReference type="PANTHER" id="PTHR10884:SF14">
    <property type="entry name" value="NADH DEHYDROGENASE [UBIQUINONE] IRON-SULFUR PROTEIN 3, MITOCHONDRIAL"/>
    <property type="match status" value="1"/>
</dbReference>
<dbReference type="PANTHER" id="PTHR10884">
    <property type="entry name" value="NADH DEHYDROGENASE UBIQUINONE IRON-SULFUR PROTEIN 3"/>
    <property type="match status" value="1"/>
</dbReference>
<dbReference type="Pfam" id="PF00329">
    <property type="entry name" value="Complex1_30kDa"/>
    <property type="match status" value="1"/>
</dbReference>
<dbReference type="SUPFAM" id="SSF143243">
    <property type="entry name" value="Nqo5-like"/>
    <property type="match status" value="1"/>
</dbReference>
<dbReference type="PROSITE" id="PS00542">
    <property type="entry name" value="COMPLEX1_30K"/>
    <property type="match status" value="1"/>
</dbReference>
<organism>
    <name type="scientific">Bartonella henselae (strain ATCC 49882 / DSM 28221 / CCUG 30454 / Houston 1)</name>
    <name type="common">Rochalimaea henselae</name>
    <dbReference type="NCBI Taxonomy" id="283166"/>
    <lineage>
        <taxon>Bacteria</taxon>
        <taxon>Pseudomonadati</taxon>
        <taxon>Pseudomonadota</taxon>
        <taxon>Alphaproteobacteria</taxon>
        <taxon>Hyphomicrobiales</taxon>
        <taxon>Bartonellaceae</taxon>
        <taxon>Bartonella</taxon>
    </lineage>
</organism>